<comment type="function">
    <text evidence="1">Condenses 4-methyl-5-(beta-hydroxyethyl)thiazole monophosphate (THZ-P) and 2-methyl-4-amino-5-hydroxymethyl pyrimidine pyrophosphate (HMP-PP) to form thiamine monophosphate (TMP).</text>
</comment>
<comment type="catalytic activity">
    <reaction evidence="1">
        <text>2-[(2R,5Z)-2-carboxy-4-methylthiazol-5(2H)-ylidene]ethyl phosphate + 4-amino-2-methyl-5-(diphosphooxymethyl)pyrimidine + 2 H(+) = thiamine phosphate + CO2 + diphosphate</text>
        <dbReference type="Rhea" id="RHEA:47844"/>
        <dbReference type="ChEBI" id="CHEBI:15378"/>
        <dbReference type="ChEBI" id="CHEBI:16526"/>
        <dbReference type="ChEBI" id="CHEBI:33019"/>
        <dbReference type="ChEBI" id="CHEBI:37575"/>
        <dbReference type="ChEBI" id="CHEBI:57841"/>
        <dbReference type="ChEBI" id="CHEBI:62899"/>
        <dbReference type="EC" id="2.5.1.3"/>
    </reaction>
</comment>
<comment type="catalytic activity">
    <reaction evidence="1">
        <text>2-(2-carboxy-4-methylthiazol-5-yl)ethyl phosphate + 4-amino-2-methyl-5-(diphosphooxymethyl)pyrimidine + 2 H(+) = thiamine phosphate + CO2 + diphosphate</text>
        <dbReference type="Rhea" id="RHEA:47848"/>
        <dbReference type="ChEBI" id="CHEBI:15378"/>
        <dbReference type="ChEBI" id="CHEBI:16526"/>
        <dbReference type="ChEBI" id="CHEBI:33019"/>
        <dbReference type="ChEBI" id="CHEBI:37575"/>
        <dbReference type="ChEBI" id="CHEBI:57841"/>
        <dbReference type="ChEBI" id="CHEBI:62890"/>
        <dbReference type="EC" id="2.5.1.3"/>
    </reaction>
</comment>
<comment type="catalytic activity">
    <reaction evidence="1">
        <text>4-methyl-5-(2-phosphooxyethyl)-thiazole + 4-amino-2-methyl-5-(diphosphooxymethyl)pyrimidine + H(+) = thiamine phosphate + diphosphate</text>
        <dbReference type="Rhea" id="RHEA:22328"/>
        <dbReference type="ChEBI" id="CHEBI:15378"/>
        <dbReference type="ChEBI" id="CHEBI:33019"/>
        <dbReference type="ChEBI" id="CHEBI:37575"/>
        <dbReference type="ChEBI" id="CHEBI:57841"/>
        <dbReference type="ChEBI" id="CHEBI:58296"/>
        <dbReference type="EC" id="2.5.1.3"/>
    </reaction>
</comment>
<comment type="cofactor">
    <cofactor evidence="1">
        <name>Mg(2+)</name>
        <dbReference type="ChEBI" id="CHEBI:18420"/>
    </cofactor>
    <text evidence="1">Binds 1 Mg(2+) ion per subunit.</text>
</comment>
<comment type="pathway">
    <text evidence="1">Cofactor biosynthesis; thiamine diphosphate biosynthesis; thiamine phosphate from 4-amino-2-methyl-5-diphosphomethylpyrimidine and 4-methyl-5-(2-phosphoethyl)-thiazole: step 1/1.</text>
</comment>
<comment type="similarity">
    <text evidence="1">Belongs to the thiamine-phosphate synthase family.</text>
</comment>
<feature type="chain" id="PRO_0000336396" description="Thiamine-phosphate synthase">
    <location>
        <begin position="1"/>
        <end position="206"/>
    </location>
</feature>
<feature type="binding site" evidence="1">
    <location>
        <begin position="33"/>
        <end position="37"/>
    </location>
    <ligand>
        <name>4-amino-2-methyl-5-(diphosphooxymethyl)pyrimidine</name>
        <dbReference type="ChEBI" id="CHEBI:57841"/>
    </ligand>
</feature>
<feature type="binding site" evidence="1">
    <location>
        <position position="65"/>
    </location>
    <ligand>
        <name>4-amino-2-methyl-5-(diphosphooxymethyl)pyrimidine</name>
        <dbReference type="ChEBI" id="CHEBI:57841"/>
    </ligand>
</feature>
<feature type="binding site" evidence="1">
    <location>
        <position position="66"/>
    </location>
    <ligand>
        <name>Mg(2+)</name>
        <dbReference type="ChEBI" id="CHEBI:18420"/>
    </ligand>
</feature>
<feature type="binding site" evidence="1">
    <location>
        <position position="85"/>
    </location>
    <ligand>
        <name>Mg(2+)</name>
        <dbReference type="ChEBI" id="CHEBI:18420"/>
    </ligand>
</feature>
<feature type="binding site" evidence="1">
    <location>
        <position position="104"/>
    </location>
    <ligand>
        <name>4-amino-2-methyl-5-(diphosphooxymethyl)pyrimidine</name>
        <dbReference type="ChEBI" id="CHEBI:57841"/>
    </ligand>
</feature>
<feature type="binding site" evidence="1">
    <location>
        <begin position="130"/>
        <end position="132"/>
    </location>
    <ligand>
        <name>2-[(2R,5Z)-2-carboxy-4-methylthiazol-5(2H)-ylidene]ethyl phosphate</name>
        <dbReference type="ChEBI" id="CHEBI:62899"/>
    </ligand>
</feature>
<feature type="binding site" evidence="1">
    <location>
        <position position="133"/>
    </location>
    <ligand>
        <name>4-amino-2-methyl-5-(diphosphooxymethyl)pyrimidine</name>
        <dbReference type="ChEBI" id="CHEBI:57841"/>
    </ligand>
</feature>
<feature type="binding site" evidence="1">
    <location>
        <position position="166"/>
    </location>
    <ligand>
        <name>2-[(2R,5Z)-2-carboxy-4-methylthiazol-5(2H)-ylidene]ethyl phosphate</name>
        <dbReference type="ChEBI" id="CHEBI:62899"/>
    </ligand>
</feature>
<gene>
    <name evidence="1" type="primary">thiE</name>
    <name type="ordered locus">FP0431</name>
</gene>
<dbReference type="EC" id="2.5.1.3" evidence="1"/>
<dbReference type="EMBL" id="AM398681">
    <property type="protein sequence ID" value="CAL42542.1"/>
    <property type="molecule type" value="Genomic_DNA"/>
</dbReference>
<dbReference type="RefSeq" id="WP_011962600.1">
    <property type="nucleotide sequence ID" value="NC_009613.3"/>
</dbReference>
<dbReference type="RefSeq" id="YP_001295360.1">
    <property type="nucleotide sequence ID" value="NC_009613.3"/>
</dbReference>
<dbReference type="SMR" id="A6GWR9"/>
<dbReference type="STRING" id="402612.FP0431"/>
<dbReference type="EnsemblBacteria" id="CAL42542">
    <property type="protein sequence ID" value="CAL42542"/>
    <property type="gene ID" value="FP0431"/>
</dbReference>
<dbReference type="KEGG" id="fps:FP0431"/>
<dbReference type="PATRIC" id="fig|402612.5.peg.445"/>
<dbReference type="eggNOG" id="COG0352">
    <property type="taxonomic scope" value="Bacteria"/>
</dbReference>
<dbReference type="HOGENOM" id="CLU_018272_3_2_10"/>
<dbReference type="OrthoDB" id="9812206at2"/>
<dbReference type="UniPathway" id="UPA00060">
    <property type="reaction ID" value="UER00141"/>
</dbReference>
<dbReference type="Proteomes" id="UP000006394">
    <property type="component" value="Chromosome"/>
</dbReference>
<dbReference type="GO" id="GO:0005737">
    <property type="term" value="C:cytoplasm"/>
    <property type="evidence" value="ECO:0007669"/>
    <property type="project" value="TreeGrafter"/>
</dbReference>
<dbReference type="GO" id="GO:0000287">
    <property type="term" value="F:magnesium ion binding"/>
    <property type="evidence" value="ECO:0007669"/>
    <property type="project" value="UniProtKB-UniRule"/>
</dbReference>
<dbReference type="GO" id="GO:0004789">
    <property type="term" value="F:thiamine-phosphate diphosphorylase activity"/>
    <property type="evidence" value="ECO:0007669"/>
    <property type="project" value="UniProtKB-UniRule"/>
</dbReference>
<dbReference type="GO" id="GO:0009228">
    <property type="term" value="P:thiamine biosynthetic process"/>
    <property type="evidence" value="ECO:0007669"/>
    <property type="project" value="UniProtKB-KW"/>
</dbReference>
<dbReference type="GO" id="GO:0009229">
    <property type="term" value="P:thiamine diphosphate biosynthetic process"/>
    <property type="evidence" value="ECO:0007669"/>
    <property type="project" value="UniProtKB-UniRule"/>
</dbReference>
<dbReference type="CDD" id="cd00564">
    <property type="entry name" value="TMP_TenI"/>
    <property type="match status" value="1"/>
</dbReference>
<dbReference type="FunFam" id="3.20.20.70:FF:000096">
    <property type="entry name" value="Thiamine-phosphate synthase"/>
    <property type="match status" value="1"/>
</dbReference>
<dbReference type="Gene3D" id="3.20.20.70">
    <property type="entry name" value="Aldolase class I"/>
    <property type="match status" value="1"/>
</dbReference>
<dbReference type="HAMAP" id="MF_00097">
    <property type="entry name" value="TMP_synthase"/>
    <property type="match status" value="1"/>
</dbReference>
<dbReference type="InterPro" id="IPR013785">
    <property type="entry name" value="Aldolase_TIM"/>
</dbReference>
<dbReference type="InterPro" id="IPR036206">
    <property type="entry name" value="ThiamineP_synth_sf"/>
</dbReference>
<dbReference type="InterPro" id="IPR022998">
    <property type="entry name" value="ThiamineP_synth_TenI"/>
</dbReference>
<dbReference type="InterPro" id="IPR034291">
    <property type="entry name" value="TMP_synthase"/>
</dbReference>
<dbReference type="NCBIfam" id="NF000736">
    <property type="entry name" value="PRK00043.2-3"/>
    <property type="match status" value="1"/>
</dbReference>
<dbReference type="NCBIfam" id="TIGR00693">
    <property type="entry name" value="thiE"/>
    <property type="match status" value="1"/>
</dbReference>
<dbReference type="PANTHER" id="PTHR20857">
    <property type="entry name" value="THIAMINE-PHOSPHATE PYROPHOSPHORYLASE"/>
    <property type="match status" value="1"/>
</dbReference>
<dbReference type="PANTHER" id="PTHR20857:SF15">
    <property type="entry name" value="THIAMINE-PHOSPHATE SYNTHASE"/>
    <property type="match status" value="1"/>
</dbReference>
<dbReference type="Pfam" id="PF02581">
    <property type="entry name" value="TMP-TENI"/>
    <property type="match status" value="1"/>
</dbReference>
<dbReference type="SUPFAM" id="SSF51391">
    <property type="entry name" value="Thiamin phosphate synthase"/>
    <property type="match status" value="1"/>
</dbReference>
<protein>
    <recommendedName>
        <fullName evidence="1">Thiamine-phosphate synthase</fullName>
        <shortName evidence="1">TP synthase</shortName>
        <shortName evidence="1">TPS</shortName>
        <ecNumber evidence="1">2.5.1.3</ecNumber>
    </recommendedName>
    <alternativeName>
        <fullName evidence="1">Thiamine-phosphate pyrophosphorylase</fullName>
        <shortName evidence="1">TMP pyrophosphorylase</shortName>
        <shortName evidence="1">TMP-PPase</shortName>
    </alternativeName>
</protein>
<keyword id="KW-0460">Magnesium</keyword>
<keyword id="KW-0479">Metal-binding</keyword>
<keyword id="KW-1185">Reference proteome</keyword>
<keyword id="KW-0784">Thiamine biosynthesis</keyword>
<keyword id="KW-0808">Transferase</keyword>
<name>THIE_FLAPJ</name>
<reference key="1">
    <citation type="journal article" date="2007" name="Nat. Biotechnol.">
        <title>Complete genome sequence of the fish pathogen Flavobacterium psychrophilum.</title>
        <authorList>
            <person name="Duchaud E."/>
            <person name="Boussaha M."/>
            <person name="Loux V."/>
            <person name="Bernardet J.-F."/>
            <person name="Michel C."/>
            <person name="Kerouault B."/>
            <person name="Mondot S."/>
            <person name="Nicolas P."/>
            <person name="Bossy R."/>
            <person name="Caron C."/>
            <person name="Bessieres P."/>
            <person name="Gibrat J.-F."/>
            <person name="Claverol S."/>
            <person name="Dumetz F."/>
            <person name="Le Henaff M."/>
            <person name="Benmansour A."/>
        </authorList>
    </citation>
    <scope>NUCLEOTIDE SEQUENCE [LARGE SCALE GENOMIC DNA]</scope>
    <source>
        <strain>ATCC 49511 / DSM 21280 / CIP 103535 / JIP02/86</strain>
    </source>
</reference>
<proteinExistence type="inferred from homology"/>
<evidence type="ECO:0000255" key="1">
    <source>
        <dbReference type="HAMAP-Rule" id="MF_00097"/>
    </source>
</evidence>
<sequence>MYNKLQYISQGKTIEEQLLNIRKALENGCQWIQMRFKDTHSDNVFTLAEAVKRMCQEYTATFIINDNVYLAKKINADGVHLGLNDMNIAEARTILGEAKIIGGTANTFEEVLQRTAENCNYIGLGPFQFTATKEKLSPVLGLEGYHLIIQQMKTKKNKIPIYAIGGIQLENVDDIMKTGIYGIAVSGLITQSENPFQLITQLNKKL</sequence>
<organism>
    <name type="scientific">Flavobacterium psychrophilum (strain ATCC 49511 / DSM 21280 / CIP 103535 / JIP02/86)</name>
    <dbReference type="NCBI Taxonomy" id="402612"/>
    <lineage>
        <taxon>Bacteria</taxon>
        <taxon>Pseudomonadati</taxon>
        <taxon>Bacteroidota</taxon>
        <taxon>Flavobacteriia</taxon>
        <taxon>Flavobacteriales</taxon>
        <taxon>Flavobacteriaceae</taxon>
        <taxon>Flavobacterium</taxon>
    </lineage>
</organism>
<accession>A6GWR9</accession>